<protein>
    <recommendedName>
        <fullName>Thymidylate synthase</fullName>
        <shortName>TS</shortName>
        <shortName>TSase</shortName>
        <ecNumber>2.1.1.45</ecNumber>
    </recommendedName>
</protein>
<evidence type="ECO:0000250" key="1">
    <source>
        <dbReference type="UniProtKB" id="P0A884"/>
    </source>
</evidence>
<evidence type="ECO:0000305" key="2"/>
<accession>P12462</accession>
<comment type="catalytic activity">
    <reaction>
        <text>dUMP + (6R)-5,10-methylene-5,6,7,8-tetrahydrofolate = 7,8-dihydrofolate + dTMP</text>
        <dbReference type="Rhea" id="RHEA:12104"/>
        <dbReference type="ChEBI" id="CHEBI:15636"/>
        <dbReference type="ChEBI" id="CHEBI:57451"/>
        <dbReference type="ChEBI" id="CHEBI:63528"/>
        <dbReference type="ChEBI" id="CHEBI:246422"/>
        <dbReference type="EC" id="2.1.1.45"/>
    </reaction>
</comment>
<comment type="pathway">
    <text>Pyrimidine metabolism; dTTP biosynthesis.</text>
</comment>
<comment type="subunit">
    <text>Homodimer.</text>
</comment>
<comment type="similarity">
    <text evidence="2">Belongs to the thymidylate synthase family.</text>
</comment>
<reference key="1">
    <citation type="journal article" date="1988" name="J. Virol.">
        <title>Thymidylate synthase gene of herpesvirus ateles.</title>
        <authorList>
            <person name="Richter J."/>
            <person name="Puchtler I."/>
            <person name="Fleckenstein B."/>
        </authorList>
    </citation>
    <scope>NUCLEOTIDE SEQUENCE [GENOMIC DNA]</scope>
    <source>
        <strain>810</strain>
    </source>
</reference>
<dbReference type="EC" id="2.1.1.45"/>
<dbReference type="EMBL" id="M22036">
    <property type="protein sequence ID" value="AAA46170.1"/>
    <property type="molecule type" value="Genomic_DNA"/>
</dbReference>
<dbReference type="PIR" id="A28879">
    <property type="entry name" value="SYBEAT"/>
</dbReference>
<dbReference type="SMR" id="P12462"/>
<dbReference type="OrthoDB" id="13491at10239"/>
<dbReference type="UniPathway" id="UPA00575"/>
<dbReference type="Proteomes" id="UP000242798">
    <property type="component" value="Genome"/>
</dbReference>
<dbReference type="GO" id="GO:0004799">
    <property type="term" value="F:thymidylate synthase activity"/>
    <property type="evidence" value="ECO:0007669"/>
    <property type="project" value="UniProtKB-EC"/>
</dbReference>
<dbReference type="GO" id="GO:0006231">
    <property type="term" value="P:dTMP biosynthetic process"/>
    <property type="evidence" value="ECO:0007669"/>
    <property type="project" value="InterPro"/>
</dbReference>
<dbReference type="GO" id="GO:0006235">
    <property type="term" value="P:dTTP biosynthetic process"/>
    <property type="evidence" value="ECO:0007669"/>
    <property type="project" value="UniProtKB-UniPathway"/>
</dbReference>
<dbReference type="GO" id="GO:0032259">
    <property type="term" value="P:methylation"/>
    <property type="evidence" value="ECO:0007669"/>
    <property type="project" value="UniProtKB-KW"/>
</dbReference>
<dbReference type="CDD" id="cd00351">
    <property type="entry name" value="TS_Pyrimidine_HMase"/>
    <property type="match status" value="1"/>
</dbReference>
<dbReference type="FunFam" id="3.30.572.10:FF:000002">
    <property type="entry name" value="Possible thymidylate synthase"/>
    <property type="match status" value="1"/>
</dbReference>
<dbReference type="Gene3D" id="3.30.572.10">
    <property type="entry name" value="Thymidylate synthase/dCMP hydroxymethylase domain"/>
    <property type="match status" value="1"/>
</dbReference>
<dbReference type="HAMAP" id="MF_00008">
    <property type="entry name" value="Thymidy_synth_bact"/>
    <property type="match status" value="1"/>
</dbReference>
<dbReference type="InterPro" id="IPR045097">
    <property type="entry name" value="Thymidate_synth/dCMP_Mease"/>
</dbReference>
<dbReference type="InterPro" id="IPR023451">
    <property type="entry name" value="Thymidate_synth/dCMP_Mease_dom"/>
</dbReference>
<dbReference type="InterPro" id="IPR036926">
    <property type="entry name" value="Thymidate_synth/dCMP_Mease_sf"/>
</dbReference>
<dbReference type="InterPro" id="IPR000398">
    <property type="entry name" value="Thymidylate_synthase"/>
</dbReference>
<dbReference type="InterPro" id="IPR020940">
    <property type="entry name" value="Thymidylate_synthase_AS"/>
</dbReference>
<dbReference type="NCBIfam" id="NF002497">
    <property type="entry name" value="PRK01827.1-3"/>
    <property type="match status" value="1"/>
</dbReference>
<dbReference type="NCBIfam" id="TIGR03284">
    <property type="entry name" value="thym_sym"/>
    <property type="match status" value="1"/>
</dbReference>
<dbReference type="PANTHER" id="PTHR11548:SF2">
    <property type="entry name" value="THYMIDYLATE SYNTHASE"/>
    <property type="match status" value="1"/>
</dbReference>
<dbReference type="PANTHER" id="PTHR11548">
    <property type="entry name" value="THYMIDYLATE SYNTHASE 1"/>
    <property type="match status" value="1"/>
</dbReference>
<dbReference type="Pfam" id="PF00303">
    <property type="entry name" value="Thymidylat_synt"/>
    <property type="match status" value="1"/>
</dbReference>
<dbReference type="PRINTS" id="PR00108">
    <property type="entry name" value="THYMDSNTHASE"/>
</dbReference>
<dbReference type="SUPFAM" id="SSF55831">
    <property type="entry name" value="Thymidylate synthase/dCMP hydroxymethylase"/>
    <property type="match status" value="1"/>
</dbReference>
<dbReference type="PROSITE" id="PS00091">
    <property type="entry name" value="THYMIDYLATE_SYNTHASE"/>
    <property type="match status" value="1"/>
</dbReference>
<feature type="chain" id="PRO_0000141064" description="Thymidylate synthase">
    <location>
        <begin position="1"/>
        <end position="290"/>
    </location>
</feature>
<feature type="active site" description="Nucleophile" evidence="1">
    <location>
        <position position="172"/>
    </location>
</feature>
<feature type="binding site" description="in other chain" evidence="1">
    <location>
        <position position="27"/>
    </location>
    <ligand>
        <name>dUMP</name>
        <dbReference type="ChEBI" id="CHEBI:246422"/>
        <note>ligand shared between dimeric partners</note>
    </ligand>
</feature>
<feature type="binding site" evidence="1">
    <location>
        <begin position="152"/>
        <end position="153"/>
    </location>
    <ligand>
        <name>dUMP</name>
        <dbReference type="ChEBI" id="CHEBI:246422"/>
        <note>ligand shared between dimeric partners</note>
    </ligand>
</feature>
<feature type="binding site" description="in other chain" evidence="1">
    <location>
        <begin position="192"/>
        <end position="195"/>
    </location>
    <ligand>
        <name>dUMP</name>
        <dbReference type="ChEBI" id="CHEBI:246422"/>
        <note>ligand shared between dimeric partners</note>
    </ligand>
</feature>
<feature type="binding site" evidence="1">
    <location>
        <position position="195"/>
    </location>
    <ligand>
        <name>(6R)-5,10-methylene-5,6,7,8-tetrahydrofolate</name>
        <dbReference type="ChEBI" id="CHEBI:15636"/>
    </ligand>
</feature>
<feature type="binding site" description="in other chain" evidence="1">
    <location>
        <position position="203"/>
    </location>
    <ligand>
        <name>dUMP</name>
        <dbReference type="ChEBI" id="CHEBI:246422"/>
        <note>ligand shared between dimeric partners</note>
    </ligand>
</feature>
<feature type="binding site" description="in other chain" evidence="1">
    <location>
        <begin position="233"/>
        <end position="235"/>
    </location>
    <ligand>
        <name>dUMP</name>
        <dbReference type="ChEBI" id="CHEBI:246422"/>
        <note>ligand shared between dimeric partners</note>
    </ligand>
</feature>
<feature type="binding site" evidence="1">
    <location>
        <position position="289"/>
    </location>
    <ligand>
        <name>(6R)-5,10-methylene-5,6,7,8-tetrahydrofolate</name>
        <dbReference type="ChEBI" id="CHEBI:15636"/>
    </ligand>
</feature>
<proteinExistence type="inferred from homology"/>
<gene>
    <name type="primary">TS</name>
</gene>
<organismHost>
    <name type="scientific">Ateles</name>
    <dbReference type="NCBI Taxonomy" id="9506"/>
</organismHost>
<sequence>MEELHAEHQYLSQVKHILNCGNFKHDRTGVGTLSVFGMQSRYSLEKDFPLLTTKRVFWRGVVEELLWFIRGSTDSKELAASGVHIWDANGSRSYLDKLGLFDREEGDLGPVYGFQWRHFGAEYQGLKHNYGGEGVDQLKQIINTIHTNPTDRRMLMCAWNVLDVPKMALPPCHVLSQFYVCDGKLSCQLYQRSADMGLGVPFNIASYSLLTCMIAHVTDLVPGEFIHTLGDAHVYVNHVDALTEQLTRTPRPFPTLKFARKVASIDDFKANDIILENYNPYPSIKMPMAV</sequence>
<name>TYSY_HSVAT</name>
<keyword id="KW-0489">Methyltransferase</keyword>
<keyword id="KW-0545">Nucleotide biosynthesis</keyword>
<keyword id="KW-0808">Transferase</keyword>
<organism>
    <name type="scientific">Herpesvirus ateles</name>
    <dbReference type="NCBI Taxonomy" id="10380"/>
    <lineage>
        <taxon>Viruses</taxon>
        <taxon>Duplodnaviria</taxon>
        <taxon>Heunggongvirae</taxon>
        <taxon>Peploviricota</taxon>
        <taxon>Herviviricetes</taxon>
        <taxon>Herpesvirales</taxon>
        <taxon>Orthoherpesviridae</taxon>
        <taxon>Gammaherpesvirinae</taxon>
        <taxon>Rhadinovirus</taxon>
        <taxon>Rhadinovirus atelinegamma2</taxon>
    </lineage>
</organism>